<name>NU3C_PHYPA</name>
<feature type="chain" id="PRO_0000362865" description="NAD(P)H-quinone oxidoreductase subunit 3, chloroplastic">
    <location>
        <begin position="1"/>
        <end position="121"/>
    </location>
</feature>
<feature type="transmembrane region" description="Helical" evidence="1">
    <location>
        <begin position="10"/>
        <end position="30"/>
    </location>
</feature>
<feature type="transmembrane region" description="Helical" evidence="1">
    <location>
        <begin position="65"/>
        <end position="85"/>
    </location>
</feature>
<feature type="transmembrane region" description="Helical" evidence="1">
    <location>
        <begin position="90"/>
        <end position="110"/>
    </location>
</feature>
<geneLocation type="chloroplast"/>
<gene>
    <name evidence="1" type="primary">ndhC</name>
</gene>
<reference key="1">
    <citation type="journal article" date="2003" name="Nucleic Acids Res.">
        <title>Complete chloroplast DNA sequence of the moss Physcomitrella patens: evidence for the loss and relocation of rpoA from the chloroplast to the nucleus.</title>
        <authorList>
            <person name="Sugiura C."/>
            <person name="Kobayashi Y."/>
            <person name="Setsuyuki A."/>
            <person name="Sugita C."/>
            <person name="Sugita M."/>
        </authorList>
    </citation>
    <scope>NUCLEOTIDE SEQUENCE [LARGE SCALE GENOMIC DNA]</scope>
    <source>
        <strain>cv. Gransden 2004</strain>
    </source>
</reference>
<proteinExistence type="inferred from homology"/>
<dbReference type="EC" id="7.1.1.-" evidence="1"/>
<dbReference type="EMBL" id="AP005672">
    <property type="protein sequence ID" value="BAC85047.1"/>
    <property type="molecule type" value="Genomic_DNA"/>
</dbReference>
<dbReference type="RefSeq" id="NP_904197.1">
    <property type="nucleotide sequence ID" value="NC_005087.2"/>
</dbReference>
<dbReference type="RefSeq" id="YP_009477527.1">
    <property type="nucleotide sequence ID" value="NC_037465.1"/>
</dbReference>
<dbReference type="SMR" id="Q6YXR0"/>
<dbReference type="FunCoup" id="Q6YXR0">
    <property type="interactions" value="61"/>
</dbReference>
<dbReference type="STRING" id="3218.Q6YXR0"/>
<dbReference type="GeneID" id="2546805"/>
<dbReference type="GeneID" id="36487144"/>
<dbReference type="KEGG" id="ppp:2546805"/>
<dbReference type="InParanoid" id="Q6YXR0"/>
<dbReference type="OrthoDB" id="1852333at2759"/>
<dbReference type="Proteomes" id="UP000006727">
    <property type="component" value="Chloroplast"/>
</dbReference>
<dbReference type="GO" id="GO:0009535">
    <property type="term" value="C:chloroplast thylakoid membrane"/>
    <property type="evidence" value="ECO:0007669"/>
    <property type="project" value="UniProtKB-SubCell"/>
</dbReference>
<dbReference type="GO" id="GO:0030964">
    <property type="term" value="C:NADH dehydrogenase complex"/>
    <property type="evidence" value="ECO:0000318"/>
    <property type="project" value="GO_Central"/>
</dbReference>
<dbReference type="GO" id="GO:0008137">
    <property type="term" value="F:NADH dehydrogenase (ubiquinone) activity"/>
    <property type="evidence" value="ECO:0000318"/>
    <property type="project" value="GO_Central"/>
</dbReference>
<dbReference type="GO" id="GO:0048038">
    <property type="term" value="F:quinone binding"/>
    <property type="evidence" value="ECO:0007669"/>
    <property type="project" value="UniProtKB-KW"/>
</dbReference>
<dbReference type="GO" id="GO:0019684">
    <property type="term" value="P:photosynthesis, light reaction"/>
    <property type="evidence" value="ECO:0007669"/>
    <property type="project" value="UniProtKB-UniRule"/>
</dbReference>
<dbReference type="FunFam" id="1.20.58.1610:FF:000001">
    <property type="entry name" value="NAD(P)H-quinone oxidoreductase subunit 3, chloroplastic"/>
    <property type="match status" value="1"/>
</dbReference>
<dbReference type="Gene3D" id="1.20.58.1610">
    <property type="entry name" value="NADH:ubiquinone/plastoquinone oxidoreductase, chain 3"/>
    <property type="match status" value="1"/>
</dbReference>
<dbReference type="HAMAP" id="MF_01394">
    <property type="entry name" value="NDH1_NuoA"/>
    <property type="match status" value="1"/>
</dbReference>
<dbReference type="InterPro" id="IPR023043">
    <property type="entry name" value="NAD(P)H_OxRDtase_bac/plastid"/>
</dbReference>
<dbReference type="InterPro" id="IPR000440">
    <property type="entry name" value="NADH_UbQ/plastoQ_OxRdtase_su3"/>
</dbReference>
<dbReference type="InterPro" id="IPR038430">
    <property type="entry name" value="NDAH_ubi_oxred_su3_sf"/>
</dbReference>
<dbReference type="PANTHER" id="PTHR11058">
    <property type="entry name" value="NADH-UBIQUINONE OXIDOREDUCTASE CHAIN 3"/>
    <property type="match status" value="1"/>
</dbReference>
<dbReference type="PANTHER" id="PTHR11058:SF9">
    <property type="entry name" value="NADH-UBIQUINONE OXIDOREDUCTASE CHAIN 3"/>
    <property type="match status" value="1"/>
</dbReference>
<dbReference type="Pfam" id="PF00507">
    <property type="entry name" value="Oxidored_q4"/>
    <property type="match status" value="1"/>
</dbReference>
<accession>Q6YXR0</accession>
<organism>
    <name type="scientific">Physcomitrium patens</name>
    <name type="common">Spreading-leaved earth moss</name>
    <name type="synonym">Physcomitrella patens</name>
    <dbReference type="NCBI Taxonomy" id="3218"/>
    <lineage>
        <taxon>Eukaryota</taxon>
        <taxon>Viridiplantae</taxon>
        <taxon>Streptophyta</taxon>
        <taxon>Embryophyta</taxon>
        <taxon>Bryophyta</taxon>
        <taxon>Bryophytina</taxon>
        <taxon>Bryopsida</taxon>
        <taxon>Funariidae</taxon>
        <taxon>Funariales</taxon>
        <taxon>Funariaceae</taxon>
        <taxon>Physcomitrium</taxon>
    </lineage>
</organism>
<evidence type="ECO:0000255" key="1">
    <source>
        <dbReference type="HAMAP-Rule" id="MF_01394"/>
    </source>
</evidence>
<comment type="function">
    <text evidence="1">NDH shuttles electrons from NAD(P)H:plastoquinone, via FMN and iron-sulfur (Fe-S) centers, to quinones in the photosynthetic chain and possibly in a chloroplast respiratory chain. The immediate electron acceptor for the enzyme in this species is believed to be plastoquinone. Couples the redox reaction to proton translocation, and thus conserves the redox energy in a proton gradient.</text>
</comment>
<comment type="catalytic activity">
    <reaction evidence="1">
        <text>a plastoquinone + NADH + (n+1) H(+)(in) = a plastoquinol + NAD(+) + n H(+)(out)</text>
        <dbReference type="Rhea" id="RHEA:42608"/>
        <dbReference type="Rhea" id="RHEA-COMP:9561"/>
        <dbReference type="Rhea" id="RHEA-COMP:9562"/>
        <dbReference type="ChEBI" id="CHEBI:15378"/>
        <dbReference type="ChEBI" id="CHEBI:17757"/>
        <dbReference type="ChEBI" id="CHEBI:57540"/>
        <dbReference type="ChEBI" id="CHEBI:57945"/>
        <dbReference type="ChEBI" id="CHEBI:62192"/>
    </reaction>
</comment>
<comment type="catalytic activity">
    <reaction evidence="1">
        <text>a plastoquinone + NADPH + (n+1) H(+)(in) = a plastoquinol + NADP(+) + n H(+)(out)</text>
        <dbReference type="Rhea" id="RHEA:42612"/>
        <dbReference type="Rhea" id="RHEA-COMP:9561"/>
        <dbReference type="Rhea" id="RHEA-COMP:9562"/>
        <dbReference type="ChEBI" id="CHEBI:15378"/>
        <dbReference type="ChEBI" id="CHEBI:17757"/>
        <dbReference type="ChEBI" id="CHEBI:57783"/>
        <dbReference type="ChEBI" id="CHEBI:58349"/>
        <dbReference type="ChEBI" id="CHEBI:62192"/>
    </reaction>
</comment>
<comment type="subunit">
    <text evidence="1">NDH is composed of at least 16 different subunits, 5 of which are encoded in the nucleus.</text>
</comment>
<comment type="subcellular location">
    <subcellularLocation>
        <location evidence="1">Plastid</location>
        <location evidence="1">Chloroplast thylakoid membrane</location>
        <topology evidence="1">Multi-pass membrane protein</topology>
    </subcellularLocation>
</comment>
<comment type="similarity">
    <text evidence="1">Belongs to the complex I subunit 3 family.</text>
</comment>
<keyword id="KW-0150">Chloroplast</keyword>
<keyword id="KW-0472">Membrane</keyword>
<keyword id="KW-0520">NAD</keyword>
<keyword id="KW-0521">NADP</keyword>
<keyword id="KW-0934">Plastid</keyword>
<keyword id="KW-0618">Plastoquinone</keyword>
<keyword id="KW-0874">Quinone</keyword>
<keyword id="KW-1185">Reference proteome</keyword>
<keyword id="KW-0793">Thylakoid</keyword>
<keyword id="KW-1278">Translocase</keyword>
<keyword id="KW-0812">Transmembrane</keyword>
<keyword id="KW-1133">Transmembrane helix</keyword>
<keyword id="KW-0813">Transport</keyword>
<sequence length="121" mass="13945">MFLLPKYNSFFIFLLLASVIPILAFSISKFLAPNNTQGPEKLTSYESGIEPMGDAWIQFQIRYYMFALVFVIFDVETVFLYPWAMSFNDLGLSAFIEALVFVFILIIGLVYAWRKGALEWS</sequence>
<protein>
    <recommendedName>
        <fullName evidence="1">NAD(P)H-quinone oxidoreductase subunit 3, chloroplastic</fullName>
        <ecNumber evidence="1">7.1.1.-</ecNumber>
    </recommendedName>
    <alternativeName>
        <fullName evidence="1">NAD(P)H dehydrogenase subunit 3</fullName>
    </alternativeName>
    <alternativeName>
        <fullName evidence="1">NADH-plastoquinone oxidoreductase subunit 3</fullName>
    </alternativeName>
</protein>